<organism>
    <name type="scientific">Helicobacter pylori (strain ATCC 700392 / 26695)</name>
    <name type="common">Campylobacter pylori</name>
    <dbReference type="NCBI Taxonomy" id="85962"/>
    <lineage>
        <taxon>Bacteria</taxon>
        <taxon>Pseudomonadati</taxon>
        <taxon>Campylobacterota</taxon>
        <taxon>Epsilonproteobacteria</taxon>
        <taxon>Campylobacterales</taxon>
        <taxon>Helicobacteraceae</taxon>
        <taxon>Helicobacter</taxon>
    </lineage>
</organism>
<name>FUR_HELPY</name>
<feature type="chain" id="PRO_0000095555" description="Ferric uptake regulation protein">
    <location>
        <begin position="1"/>
        <end position="150"/>
    </location>
</feature>
<feature type="region of interest" description="DNA-binding" evidence="1">
    <location>
        <begin position="1"/>
        <end position="93"/>
    </location>
</feature>
<feature type="region of interest" description="Dimerization" evidence="1">
    <location>
        <begin position="94"/>
        <end position="150"/>
    </location>
</feature>
<feature type="binding site" evidence="1">
    <location>
        <position position="42"/>
    </location>
    <ligand>
        <name>Zn(2+)</name>
        <dbReference type="ChEBI" id="CHEBI:29105"/>
    </ligand>
</feature>
<feature type="binding site" evidence="1">
    <location>
        <position position="90"/>
    </location>
    <ligand>
        <name>Zn(2+)</name>
        <dbReference type="ChEBI" id="CHEBI:29105"/>
    </ligand>
</feature>
<feature type="binding site" evidence="1">
    <location>
        <position position="96"/>
    </location>
    <ligand>
        <name>Fe cation</name>
        <dbReference type="ChEBI" id="CHEBI:24875"/>
    </ligand>
</feature>
<feature type="binding site" evidence="1">
    <location>
        <position position="98"/>
    </location>
    <ligand>
        <name>Fe cation</name>
        <dbReference type="ChEBI" id="CHEBI:24875"/>
    </ligand>
</feature>
<feature type="binding site" evidence="1">
    <location>
        <position position="99"/>
    </location>
    <ligand>
        <name>Zn(2+)</name>
        <dbReference type="ChEBI" id="CHEBI:29105"/>
    </ligand>
</feature>
<feature type="binding site" evidence="1">
    <location>
        <position position="102"/>
    </location>
    <ligand>
        <name>Zn(2+)</name>
        <dbReference type="ChEBI" id="CHEBI:29105"/>
    </ligand>
</feature>
<feature type="binding site" evidence="1">
    <location>
        <position position="105"/>
    </location>
    <ligand>
        <name>Zn(2+)</name>
        <dbReference type="ChEBI" id="CHEBI:29105"/>
    </ligand>
</feature>
<feature type="binding site" evidence="1">
    <location>
        <position position="110"/>
    </location>
    <ligand>
        <name>Zn(2+)</name>
        <dbReference type="ChEBI" id="CHEBI:29105"/>
    </ligand>
</feature>
<feature type="binding site" evidence="1">
    <location>
        <position position="117"/>
    </location>
    <ligand>
        <name>Fe cation</name>
        <dbReference type="ChEBI" id="CHEBI:24875"/>
    </ligand>
</feature>
<feature type="binding site" evidence="1">
    <location>
        <position position="134"/>
    </location>
    <ligand>
        <name>Fe cation</name>
        <dbReference type="ChEBI" id="CHEBI:24875"/>
    </ligand>
</feature>
<feature type="sequence conflict" description="In Ref. 2; CAA74751." evidence="2" ref="2">
    <original>V</original>
    <variation>I</variation>
    <location>
        <position position="124"/>
    </location>
</feature>
<feature type="helix" evidence="3">
    <location>
        <begin position="7"/>
        <end position="20"/>
    </location>
</feature>
<feature type="helix" evidence="3">
    <location>
        <begin position="26"/>
        <end position="38"/>
    </location>
</feature>
<feature type="helix" evidence="3">
    <location>
        <begin position="45"/>
        <end position="55"/>
    </location>
</feature>
<feature type="helix" evidence="3">
    <location>
        <begin position="61"/>
        <end position="73"/>
    </location>
</feature>
<feature type="strand" evidence="3">
    <location>
        <begin position="76"/>
        <end position="82"/>
    </location>
</feature>
<feature type="turn" evidence="3">
    <location>
        <begin position="83"/>
        <end position="85"/>
    </location>
</feature>
<feature type="strand" evidence="3">
    <location>
        <begin position="86"/>
        <end position="92"/>
    </location>
</feature>
<feature type="strand" evidence="3">
    <location>
        <begin position="98"/>
        <end position="102"/>
    </location>
</feature>
<feature type="turn" evidence="3">
    <location>
        <begin position="103"/>
        <end position="105"/>
    </location>
</feature>
<feature type="strand" evidence="3">
    <location>
        <begin position="108"/>
        <end position="111"/>
    </location>
</feature>
<feature type="helix" evidence="3">
    <location>
        <begin position="114"/>
        <end position="125"/>
    </location>
</feature>
<feature type="turn" evidence="3">
    <location>
        <begin position="126"/>
        <end position="128"/>
    </location>
</feature>
<feature type="strand" evidence="3">
    <location>
        <begin position="130"/>
        <end position="141"/>
    </location>
</feature>
<feature type="helix" evidence="3">
    <location>
        <begin position="143"/>
        <end position="146"/>
    </location>
</feature>
<reference key="1">
    <citation type="journal article" date="1997" name="Nature">
        <title>The complete genome sequence of the gastric pathogen Helicobacter pylori.</title>
        <authorList>
            <person name="Tomb J.-F."/>
            <person name="White O."/>
            <person name="Kerlavage A.R."/>
            <person name="Clayton R.A."/>
            <person name="Sutton G.G."/>
            <person name="Fleischmann R.D."/>
            <person name="Ketchum K.A."/>
            <person name="Klenk H.-P."/>
            <person name="Gill S.R."/>
            <person name="Dougherty B.A."/>
            <person name="Nelson K.E."/>
            <person name="Quackenbush J."/>
            <person name="Zhou L."/>
            <person name="Kirkness E.F."/>
            <person name="Peterson S.N."/>
            <person name="Loftus B.J."/>
            <person name="Richardson D.L."/>
            <person name="Dodson R.J."/>
            <person name="Khalak H.G."/>
            <person name="Glodek A."/>
            <person name="McKenney K."/>
            <person name="FitzGerald L.M."/>
            <person name="Lee N."/>
            <person name="Adams M.D."/>
            <person name="Hickey E.K."/>
            <person name="Berg D.E."/>
            <person name="Gocayne J.D."/>
            <person name="Utterback T.R."/>
            <person name="Peterson J.D."/>
            <person name="Kelley J.M."/>
            <person name="Cotton M.D."/>
            <person name="Weidman J.F."/>
            <person name="Fujii C."/>
            <person name="Bowman C."/>
            <person name="Watthey L."/>
            <person name="Wallin E."/>
            <person name="Hayes W.S."/>
            <person name="Borodovsky M."/>
            <person name="Karp P.D."/>
            <person name="Smith H.O."/>
            <person name="Fraser C.M."/>
            <person name="Venter J.C."/>
        </authorList>
    </citation>
    <scope>NUCLEOTIDE SEQUENCE [LARGE SCALE GENOMIC DNA]</scope>
    <source>
        <strain>ATCC 700392 / 26695</strain>
    </source>
</reference>
<reference key="2">
    <citation type="journal article" date="1998" name="FEMS Microbiol. Lett.">
        <title>Cloning and characterization of the fur gene from Helicobacter pylori.</title>
        <authorList>
            <person name="Bereswill S."/>
            <person name="Lichte F."/>
            <person name="Vey T."/>
            <person name="Fassbinder F."/>
            <person name="Kist M."/>
        </authorList>
    </citation>
    <scope>NUCLEOTIDE SEQUENCE [GENOMIC DNA]</scope>
    <source>
        <strain>DSM 4867 / CCUG 17874 / NCTC 11638</strain>
    </source>
</reference>
<keyword id="KW-0002">3D-structure</keyword>
<keyword id="KW-0963">Cytoplasm</keyword>
<keyword id="KW-0238">DNA-binding</keyword>
<keyword id="KW-0408">Iron</keyword>
<keyword id="KW-0479">Metal-binding</keyword>
<keyword id="KW-1185">Reference proteome</keyword>
<keyword id="KW-0678">Repressor</keyword>
<keyword id="KW-0804">Transcription</keyword>
<keyword id="KW-0805">Transcription regulation</keyword>
<keyword id="KW-0862">Zinc</keyword>
<evidence type="ECO:0000250" key="1"/>
<evidence type="ECO:0000305" key="2"/>
<evidence type="ECO:0007829" key="3">
    <source>
        <dbReference type="PDB" id="2XIG"/>
    </source>
</evidence>
<comment type="function">
    <text evidence="1">Acts as a global negative controlling element, employing Fe(2+) as a cofactor to bind the operator of the repressed genes.</text>
</comment>
<comment type="subunit">
    <text evidence="1">Homodimer.</text>
</comment>
<comment type="subcellular location">
    <subcellularLocation>
        <location evidence="1">Cytoplasm</location>
    </subcellularLocation>
</comment>
<comment type="similarity">
    <text evidence="2">Belongs to the Fur family.</text>
</comment>
<accession>O25671</accession>
<accession>O32689</accession>
<protein>
    <recommendedName>
        <fullName>Ferric uptake regulation protein</fullName>
        <shortName>Ferric uptake regulator</shortName>
    </recommendedName>
</protein>
<dbReference type="EMBL" id="AE000511">
    <property type="protein sequence ID" value="AAD08073.1"/>
    <property type="molecule type" value="Genomic_DNA"/>
</dbReference>
<dbReference type="EMBL" id="Y14394">
    <property type="protein sequence ID" value="CAA74751.1"/>
    <property type="molecule type" value="Genomic_DNA"/>
</dbReference>
<dbReference type="PIR" id="C64648">
    <property type="entry name" value="C64648"/>
</dbReference>
<dbReference type="RefSeq" id="NP_207817.1">
    <property type="nucleotide sequence ID" value="NC_000915.1"/>
</dbReference>
<dbReference type="RefSeq" id="WP_000824996.1">
    <property type="nucleotide sequence ID" value="NC_018939.1"/>
</dbReference>
<dbReference type="PDB" id="2XIG">
    <property type="method" value="X-ray"/>
    <property type="resolution" value="1.85 A"/>
    <property type="chains" value="A/B/C/D=1-150"/>
</dbReference>
<dbReference type="PDBsum" id="2XIG"/>
<dbReference type="SMR" id="O25671"/>
<dbReference type="FunCoup" id="O25671">
    <property type="interactions" value="366"/>
</dbReference>
<dbReference type="STRING" id="85962.HP_1027"/>
<dbReference type="PaxDb" id="85962-C694_05315"/>
<dbReference type="DNASU" id="899562"/>
<dbReference type="EnsemblBacteria" id="AAD08073">
    <property type="protein sequence ID" value="AAD08073"/>
    <property type="gene ID" value="HP_1027"/>
</dbReference>
<dbReference type="KEGG" id="heo:C694_05315"/>
<dbReference type="KEGG" id="hpy:HP_1027"/>
<dbReference type="PATRIC" id="fig|85962.47.peg.1106"/>
<dbReference type="eggNOG" id="COG0735">
    <property type="taxonomic scope" value="Bacteria"/>
</dbReference>
<dbReference type="InParanoid" id="O25671"/>
<dbReference type="OrthoDB" id="8659436at2"/>
<dbReference type="PhylomeDB" id="O25671"/>
<dbReference type="EvolutionaryTrace" id="O25671"/>
<dbReference type="Proteomes" id="UP000000429">
    <property type="component" value="Chromosome"/>
</dbReference>
<dbReference type="GO" id="GO:0005829">
    <property type="term" value="C:cytosol"/>
    <property type="evidence" value="ECO:0000318"/>
    <property type="project" value="GO_Central"/>
</dbReference>
<dbReference type="GO" id="GO:0003700">
    <property type="term" value="F:DNA-binding transcription factor activity"/>
    <property type="evidence" value="ECO:0000318"/>
    <property type="project" value="GO_Central"/>
</dbReference>
<dbReference type="GO" id="GO:0000976">
    <property type="term" value="F:transcription cis-regulatory region binding"/>
    <property type="evidence" value="ECO:0000318"/>
    <property type="project" value="GO_Central"/>
</dbReference>
<dbReference type="GO" id="GO:0008270">
    <property type="term" value="F:zinc ion binding"/>
    <property type="evidence" value="ECO:0000318"/>
    <property type="project" value="GO_Central"/>
</dbReference>
<dbReference type="GO" id="GO:0045892">
    <property type="term" value="P:negative regulation of DNA-templated transcription"/>
    <property type="evidence" value="ECO:0000318"/>
    <property type="project" value="GO_Central"/>
</dbReference>
<dbReference type="GO" id="GO:1900705">
    <property type="term" value="P:negative regulation of siderophore biosynthetic process"/>
    <property type="evidence" value="ECO:0000318"/>
    <property type="project" value="GO_Central"/>
</dbReference>
<dbReference type="CDD" id="cd07153">
    <property type="entry name" value="Fur_like"/>
    <property type="match status" value="1"/>
</dbReference>
<dbReference type="FunFam" id="1.10.10.10:FF:000330">
    <property type="entry name" value="Ferric uptake regulation protein"/>
    <property type="match status" value="1"/>
</dbReference>
<dbReference type="FunFam" id="3.30.1490.190:FF:000001">
    <property type="entry name" value="Ferric uptake regulation protein"/>
    <property type="match status" value="1"/>
</dbReference>
<dbReference type="Gene3D" id="3.30.1490.190">
    <property type="match status" value="1"/>
</dbReference>
<dbReference type="Gene3D" id="1.10.10.10">
    <property type="entry name" value="Winged helix-like DNA-binding domain superfamily/Winged helix DNA-binding domain"/>
    <property type="match status" value="1"/>
</dbReference>
<dbReference type="InterPro" id="IPR002481">
    <property type="entry name" value="FUR"/>
</dbReference>
<dbReference type="InterPro" id="IPR043135">
    <property type="entry name" value="Fur_C"/>
</dbReference>
<dbReference type="InterPro" id="IPR036388">
    <property type="entry name" value="WH-like_DNA-bd_sf"/>
</dbReference>
<dbReference type="InterPro" id="IPR036390">
    <property type="entry name" value="WH_DNA-bd_sf"/>
</dbReference>
<dbReference type="PANTHER" id="PTHR33202:SF2">
    <property type="entry name" value="FERRIC UPTAKE REGULATION PROTEIN"/>
    <property type="match status" value="1"/>
</dbReference>
<dbReference type="PANTHER" id="PTHR33202">
    <property type="entry name" value="ZINC UPTAKE REGULATION PROTEIN"/>
    <property type="match status" value="1"/>
</dbReference>
<dbReference type="Pfam" id="PF01475">
    <property type="entry name" value="FUR"/>
    <property type="match status" value="1"/>
</dbReference>
<dbReference type="SUPFAM" id="SSF46785">
    <property type="entry name" value="Winged helix' DNA-binding domain"/>
    <property type="match status" value="1"/>
</dbReference>
<gene>
    <name type="primary">fur</name>
    <name type="ordered locus">HP_1027</name>
</gene>
<sequence>MKRLETLESILERLRMSIKKNGLKNSKQREEVVSVLYRSGTHLSPEEITHSIRQKDKNTSISSVYRILNFLEKENFICVLETSKSGRRYEIAAKEHHDHIICLHCGKIIEFADPEIENRQNEVVKKYQAKLISHDMKMFVWCKECQESEC</sequence>
<proteinExistence type="evidence at protein level"/>